<accession>Q8JZM2</accession>
<accession>Q8C307</accession>
<name>PR15L_MOUSE</name>
<evidence type="ECO:0000256" key="1">
    <source>
        <dbReference type="SAM" id="MobiDB-lite"/>
    </source>
</evidence>
<evidence type="ECO:0000305" key="2"/>
<proteinExistence type="evidence at protein level"/>
<gene>
    <name type="primary">Prr15l</name>
    <name type="synonym">Atad4</name>
</gene>
<protein>
    <recommendedName>
        <fullName>Proline-rich protein 15-like protein</fullName>
    </recommendedName>
    <alternativeName>
        <fullName>Protein ATAD4</fullName>
    </alternativeName>
</protein>
<keyword id="KW-1185">Reference proteome</keyword>
<dbReference type="EMBL" id="AK077279">
    <property type="protein sequence ID" value="BAC36726.1"/>
    <property type="molecule type" value="mRNA"/>
</dbReference>
<dbReference type="EMBL" id="AK087566">
    <property type="protein sequence ID" value="BAC39930.1"/>
    <property type="status" value="ALT_SEQ"/>
    <property type="molecule type" value="mRNA"/>
</dbReference>
<dbReference type="EMBL" id="AL596384">
    <property type="status" value="NOT_ANNOTATED_CDS"/>
    <property type="molecule type" value="Genomic_DNA"/>
</dbReference>
<dbReference type="EMBL" id="BC022765">
    <property type="protein sequence ID" value="AAH22765.1"/>
    <property type="molecule type" value="mRNA"/>
</dbReference>
<dbReference type="EMBL" id="BC024510">
    <property type="protein sequence ID" value="AAH24510.1"/>
    <property type="molecule type" value="mRNA"/>
</dbReference>
<dbReference type="EMBL" id="BC034192">
    <property type="protein sequence ID" value="AAH34192.1"/>
    <property type="molecule type" value="mRNA"/>
</dbReference>
<dbReference type="EMBL" id="BC034213">
    <property type="protein sequence ID" value="AAH34213.1"/>
    <property type="molecule type" value="mRNA"/>
</dbReference>
<dbReference type="EMBL" id="BC036171">
    <property type="protein sequence ID" value="AAH36171.1"/>
    <property type="molecule type" value="mRNA"/>
</dbReference>
<dbReference type="CCDS" id="CCDS25307.1"/>
<dbReference type="RefSeq" id="NP_666138.1">
    <property type="nucleotide sequence ID" value="NM_146026.2"/>
</dbReference>
<dbReference type="RefSeq" id="XP_006533083.1">
    <property type="nucleotide sequence ID" value="XM_006533020.3"/>
</dbReference>
<dbReference type="RefSeq" id="XP_006533084.1">
    <property type="nucleotide sequence ID" value="XM_006533021.3"/>
</dbReference>
<dbReference type="RefSeq" id="XP_006533085.1">
    <property type="nucleotide sequence ID" value="XM_006533022.3"/>
</dbReference>
<dbReference type="RefSeq" id="XP_011247239.1">
    <property type="nucleotide sequence ID" value="XM_011248937.2"/>
</dbReference>
<dbReference type="RefSeq" id="XP_030101723.1">
    <property type="nucleotide sequence ID" value="XM_030245863.2"/>
</dbReference>
<dbReference type="RefSeq" id="XP_030101724.1">
    <property type="nucleotide sequence ID" value="XM_030245864.1"/>
</dbReference>
<dbReference type="RefSeq" id="XP_030101725.1">
    <property type="nucleotide sequence ID" value="XM_030245865.2"/>
</dbReference>
<dbReference type="RefSeq" id="XP_030101726.1">
    <property type="nucleotide sequence ID" value="XM_030245866.2"/>
</dbReference>
<dbReference type="FunCoup" id="Q8JZM2">
    <property type="interactions" value="2"/>
</dbReference>
<dbReference type="STRING" id="10090.ENSMUSP00000103262"/>
<dbReference type="iPTMnet" id="Q8JZM2"/>
<dbReference type="PhosphoSitePlus" id="Q8JZM2"/>
<dbReference type="PaxDb" id="10090-ENSMUSP00000103262"/>
<dbReference type="PeptideAtlas" id="Q8JZM2"/>
<dbReference type="ProteomicsDB" id="291648"/>
<dbReference type="Antibodypedia" id="17807">
    <property type="antibodies" value="73 antibodies from 16 providers"/>
</dbReference>
<dbReference type="DNASU" id="217138"/>
<dbReference type="Ensembl" id="ENSMUST00000054311.6">
    <property type="protein sequence ID" value="ENSMUSP00000056614.6"/>
    <property type="gene ID" value="ENSMUSG00000047040.10"/>
</dbReference>
<dbReference type="Ensembl" id="ENSMUST00000062172.6">
    <property type="protein sequence ID" value="ENSMUSP00000056647.6"/>
    <property type="gene ID" value="ENSMUSG00000047040.10"/>
</dbReference>
<dbReference type="Ensembl" id="ENSMUST00000107633.2">
    <property type="protein sequence ID" value="ENSMUSP00000103259.2"/>
    <property type="gene ID" value="ENSMUSG00000047040.10"/>
</dbReference>
<dbReference type="Ensembl" id="ENSMUST00000107636.4">
    <property type="protein sequence ID" value="ENSMUSP00000103262.4"/>
    <property type="gene ID" value="ENSMUSG00000047040.10"/>
</dbReference>
<dbReference type="GeneID" id="217138"/>
<dbReference type="KEGG" id="mmu:217138"/>
<dbReference type="UCSC" id="uc007lcy.1">
    <property type="organism name" value="mouse"/>
</dbReference>
<dbReference type="AGR" id="MGI:2387599"/>
<dbReference type="CTD" id="79170"/>
<dbReference type="MGI" id="MGI:2387599">
    <property type="gene designation" value="Prr15l"/>
</dbReference>
<dbReference type="VEuPathDB" id="HostDB:ENSMUSG00000047040"/>
<dbReference type="eggNOG" id="ENOG502S3QC">
    <property type="taxonomic scope" value="Eukaryota"/>
</dbReference>
<dbReference type="GeneTree" id="ENSGT00940000154534"/>
<dbReference type="HOGENOM" id="CLU_144251_0_0_1"/>
<dbReference type="InParanoid" id="Q8JZM2"/>
<dbReference type="OMA" id="STGWWKL"/>
<dbReference type="OrthoDB" id="9937618at2759"/>
<dbReference type="PhylomeDB" id="Q8JZM2"/>
<dbReference type="TreeFam" id="TF333189"/>
<dbReference type="BioGRID-ORCS" id="217138">
    <property type="hits" value="4 hits in 78 CRISPR screens"/>
</dbReference>
<dbReference type="ChiTaRS" id="Prr15l">
    <property type="organism name" value="mouse"/>
</dbReference>
<dbReference type="PRO" id="PR:Q8JZM2"/>
<dbReference type="Proteomes" id="UP000000589">
    <property type="component" value="Chromosome 11"/>
</dbReference>
<dbReference type="RNAct" id="Q8JZM2">
    <property type="molecule type" value="protein"/>
</dbReference>
<dbReference type="Bgee" id="ENSMUSG00000047040">
    <property type="expression patterns" value="Expressed in right kidney and 100 other cell types or tissues"/>
</dbReference>
<dbReference type="InterPro" id="IPR028237">
    <property type="entry name" value="PRR15"/>
</dbReference>
<dbReference type="PANTHER" id="PTHR14581">
    <property type="match status" value="1"/>
</dbReference>
<dbReference type="PANTHER" id="PTHR14581:SF5">
    <property type="entry name" value="PROLINE-RICH PROTEIN 15-LIKE PROTEIN"/>
    <property type="match status" value="1"/>
</dbReference>
<dbReference type="Pfam" id="PF15321">
    <property type="entry name" value="ATAD4"/>
    <property type="match status" value="1"/>
</dbReference>
<reference key="1">
    <citation type="journal article" date="2005" name="Science">
        <title>The transcriptional landscape of the mammalian genome.</title>
        <authorList>
            <person name="Carninci P."/>
            <person name="Kasukawa T."/>
            <person name="Katayama S."/>
            <person name="Gough J."/>
            <person name="Frith M.C."/>
            <person name="Maeda N."/>
            <person name="Oyama R."/>
            <person name="Ravasi T."/>
            <person name="Lenhard B."/>
            <person name="Wells C."/>
            <person name="Kodzius R."/>
            <person name="Shimokawa K."/>
            <person name="Bajic V.B."/>
            <person name="Brenner S.E."/>
            <person name="Batalov S."/>
            <person name="Forrest A.R."/>
            <person name="Zavolan M."/>
            <person name="Davis M.J."/>
            <person name="Wilming L.G."/>
            <person name="Aidinis V."/>
            <person name="Allen J.E."/>
            <person name="Ambesi-Impiombato A."/>
            <person name="Apweiler R."/>
            <person name="Aturaliya R.N."/>
            <person name="Bailey T.L."/>
            <person name="Bansal M."/>
            <person name="Baxter L."/>
            <person name="Beisel K.W."/>
            <person name="Bersano T."/>
            <person name="Bono H."/>
            <person name="Chalk A.M."/>
            <person name="Chiu K.P."/>
            <person name="Choudhary V."/>
            <person name="Christoffels A."/>
            <person name="Clutterbuck D.R."/>
            <person name="Crowe M.L."/>
            <person name="Dalla E."/>
            <person name="Dalrymple B.P."/>
            <person name="de Bono B."/>
            <person name="Della Gatta G."/>
            <person name="di Bernardo D."/>
            <person name="Down T."/>
            <person name="Engstrom P."/>
            <person name="Fagiolini M."/>
            <person name="Faulkner G."/>
            <person name="Fletcher C.F."/>
            <person name="Fukushima T."/>
            <person name="Furuno M."/>
            <person name="Futaki S."/>
            <person name="Gariboldi M."/>
            <person name="Georgii-Hemming P."/>
            <person name="Gingeras T.R."/>
            <person name="Gojobori T."/>
            <person name="Green R.E."/>
            <person name="Gustincich S."/>
            <person name="Harbers M."/>
            <person name="Hayashi Y."/>
            <person name="Hensch T.K."/>
            <person name="Hirokawa N."/>
            <person name="Hill D."/>
            <person name="Huminiecki L."/>
            <person name="Iacono M."/>
            <person name="Ikeo K."/>
            <person name="Iwama A."/>
            <person name="Ishikawa T."/>
            <person name="Jakt M."/>
            <person name="Kanapin A."/>
            <person name="Katoh M."/>
            <person name="Kawasawa Y."/>
            <person name="Kelso J."/>
            <person name="Kitamura H."/>
            <person name="Kitano H."/>
            <person name="Kollias G."/>
            <person name="Krishnan S.P."/>
            <person name="Kruger A."/>
            <person name="Kummerfeld S.K."/>
            <person name="Kurochkin I.V."/>
            <person name="Lareau L.F."/>
            <person name="Lazarevic D."/>
            <person name="Lipovich L."/>
            <person name="Liu J."/>
            <person name="Liuni S."/>
            <person name="McWilliam S."/>
            <person name="Madan Babu M."/>
            <person name="Madera M."/>
            <person name="Marchionni L."/>
            <person name="Matsuda H."/>
            <person name="Matsuzawa S."/>
            <person name="Miki H."/>
            <person name="Mignone F."/>
            <person name="Miyake S."/>
            <person name="Morris K."/>
            <person name="Mottagui-Tabar S."/>
            <person name="Mulder N."/>
            <person name="Nakano N."/>
            <person name="Nakauchi H."/>
            <person name="Ng P."/>
            <person name="Nilsson R."/>
            <person name="Nishiguchi S."/>
            <person name="Nishikawa S."/>
            <person name="Nori F."/>
            <person name="Ohara O."/>
            <person name="Okazaki Y."/>
            <person name="Orlando V."/>
            <person name="Pang K.C."/>
            <person name="Pavan W.J."/>
            <person name="Pavesi G."/>
            <person name="Pesole G."/>
            <person name="Petrovsky N."/>
            <person name="Piazza S."/>
            <person name="Reed J."/>
            <person name="Reid J.F."/>
            <person name="Ring B.Z."/>
            <person name="Ringwald M."/>
            <person name="Rost B."/>
            <person name="Ruan Y."/>
            <person name="Salzberg S.L."/>
            <person name="Sandelin A."/>
            <person name="Schneider C."/>
            <person name="Schoenbach C."/>
            <person name="Sekiguchi K."/>
            <person name="Semple C.A."/>
            <person name="Seno S."/>
            <person name="Sessa L."/>
            <person name="Sheng Y."/>
            <person name="Shibata Y."/>
            <person name="Shimada H."/>
            <person name="Shimada K."/>
            <person name="Silva D."/>
            <person name="Sinclair B."/>
            <person name="Sperling S."/>
            <person name="Stupka E."/>
            <person name="Sugiura K."/>
            <person name="Sultana R."/>
            <person name="Takenaka Y."/>
            <person name="Taki K."/>
            <person name="Tammoja K."/>
            <person name="Tan S.L."/>
            <person name="Tang S."/>
            <person name="Taylor M.S."/>
            <person name="Tegner J."/>
            <person name="Teichmann S.A."/>
            <person name="Ueda H.R."/>
            <person name="van Nimwegen E."/>
            <person name="Verardo R."/>
            <person name="Wei C.L."/>
            <person name="Yagi K."/>
            <person name="Yamanishi H."/>
            <person name="Zabarovsky E."/>
            <person name="Zhu S."/>
            <person name="Zimmer A."/>
            <person name="Hide W."/>
            <person name="Bult C."/>
            <person name="Grimmond S.M."/>
            <person name="Teasdale R.D."/>
            <person name="Liu E.T."/>
            <person name="Brusic V."/>
            <person name="Quackenbush J."/>
            <person name="Wahlestedt C."/>
            <person name="Mattick J.S."/>
            <person name="Hume D.A."/>
            <person name="Kai C."/>
            <person name="Sasaki D."/>
            <person name="Tomaru Y."/>
            <person name="Fukuda S."/>
            <person name="Kanamori-Katayama M."/>
            <person name="Suzuki M."/>
            <person name="Aoki J."/>
            <person name="Arakawa T."/>
            <person name="Iida J."/>
            <person name="Imamura K."/>
            <person name="Itoh M."/>
            <person name="Kato T."/>
            <person name="Kawaji H."/>
            <person name="Kawagashira N."/>
            <person name="Kawashima T."/>
            <person name="Kojima M."/>
            <person name="Kondo S."/>
            <person name="Konno H."/>
            <person name="Nakano K."/>
            <person name="Ninomiya N."/>
            <person name="Nishio T."/>
            <person name="Okada M."/>
            <person name="Plessy C."/>
            <person name="Shibata K."/>
            <person name="Shiraki T."/>
            <person name="Suzuki S."/>
            <person name="Tagami M."/>
            <person name="Waki K."/>
            <person name="Watahiki A."/>
            <person name="Okamura-Oho Y."/>
            <person name="Suzuki H."/>
            <person name="Kawai J."/>
            <person name="Hayashizaki Y."/>
        </authorList>
    </citation>
    <scope>NUCLEOTIDE SEQUENCE [LARGE SCALE MRNA]</scope>
    <source>
        <strain>C57BL/6J</strain>
        <tissue>Ovary</tissue>
        <tissue>Oviduct</tissue>
        <tissue>Uterus</tissue>
    </source>
</reference>
<reference key="2">
    <citation type="journal article" date="2009" name="PLoS Biol.">
        <title>Lineage-specific biology revealed by a finished genome assembly of the mouse.</title>
        <authorList>
            <person name="Church D.M."/>
            <person name="Goodstadt L."/>
            <person name="Hillier L.W."/>
            <person name="Zody M.C."/>
            <person name="Goldstein S."/>
            <person name="She X."/>
            <person name="Bult C.J."/>
            <person name="Agarwala R."/>
            <person name="Cherry J.L."/>
            <person name="DiCuccio M."/>
            <person name="Hlavina W."/>
            <person name="Kapustin Y."/>
            <person name="Meric P."/>
            <person name="Maglott D."/>
            <person name="Birtle Z."/>
            <person name="Marques A.C."/>
            <person name="Graves T."/>
            <person name="Zhou S."/>
            <person name="Teague B."/>
            <person name="Potamousis K."/>
            <person name="Churas C."/>
            <person name="Place M."/>
            <person name="Herschleb J."/>
            <person name="Runnheim R."/>
            <person name="Forrest D."/>
            <person name="Amos-Landgraf J."/>
            <person name="Schwartz D.C."/>
            <person name="Cheng Z."/>
            <person name="Lindblad-Toh K."/>
            <person name="Eichler E.E."/>
            <person name="Ponting C.P."/>
        </authorList>
    </citation>
    <scope>NUCLEOTIDE SEQUENCE [LARGE SCALE GENOMIC DNA]</scope>
    <source>
        <strain>C57BL/6J</strain>
    </source>
</reference>
<reference key="3">
    <citation type="journal article" date="2004" name="Genome Res.">
        <title>The status, quality, and expansion of the NIH full-length cDNA project: the Mammalian Gene Collection (MGC).</title>
        <authorList>
            <consortium name="The MGC Project Team"/>
        </authorList>
    </citation>
    <scope>NUCLEOTIDE SEQUENCE [LARGE SCALE MRNA]</scope>
    <source>
        <strain>FVB/N</strain>
        <tissue>Colon</tissue>
        <tissue>Salivary gland</tissue>
    </source>
</reference>
<reference key="4">
    <citation type="journal article" date="2010" name="Cell">
        <title>A tissue-specific atlas of mouse protein phosphorylation and expression.</title>
        <authorList>
            <person name="Huttlin E.L."/>
            <person name="Jedrychowski M.P."/>
            <person name="Elias J.E."/>
            <person name="Goswami T."/>
            <person name="Rad R."/>
            <person name="Beausoleil S.A."/>
            <person name="Villen J."/>
            <person name="Haas W."/>
            <person name="Sowa M.E."/>
            <person name="Gygi S.P."/>
        </authorList>
    </citation>
    <scope>IDENTIFICATION BY MASS SPECTROMETRY [LARGE SCALE ANALYSIS]</scope>
    <source>
        <tissue>Kidney</tissue>
        <tissue>Lung</tissue>
        <tissue>Pancreas</tissue>
    </source>
</reference>
<feature type="chain" id="PRO_0000294353" description="Proline-rich protein 15-like protein">
    <location>
        <begin position="1"/>
        <end position="100"/>
    </location>
</feature>
<feature type="region of interest" description="Disordered" evidence="1">
    <location>
        <begin position="29"/>
        <end position="51"/>
    </location>
</feature>
<sequence length="100" mass="11359">MTEVGWWKLTFLRKKKSTPKVLYEIPDTYAQTEGGAEPPGPDAGDPHSDFNSRLEKIVDKNTKGKHVKVSNSGRFKEKKKVRAMLAENPNLFDDRENKGQ</sequence>
<organism>
    <name type="scientific">Mus musculus</name>
    <name type="common">Mouse</name>
    <dbReference type="NCBI Taxonomy" id="10090"/>
    <lineage>
        <taxon>Eukaryota</taxon>
        <taxon>Metazoa</taxon>
        <taxon>Chordata</taxon>
        <taxon>Craniata</taxon>
        <taxon>Vertebrata</taxon>
        <taxon>Euteleostomi</taxon>
        <taxon>Mammalia</taxon>
        <taxon>Eutheria</taxon>
        <taxon>Euarchontoglires</taxon>
        <taxon>Glires</taxon>
        <taxon>Rodentia</taxon>
        <taxon>Myomorpha</taxon>
        <taxon>Muroidea</taxon>
        <taxon>Muridae</taxon>
        <taxon>Murinae</taxon>
        <taxon>Mus</taxon>
        <taxon>Mus</taxon>
    </lineage>
</organism>
<comment type="similarity">
    <text evidence="2">Belongs to the PRR15 family.</text>
</comment>
<comment type="sequence caution" evidence="2">
    <conflict type="erroneous termination">
        <sequence resource="EMBL-CDS" id="BAC39930"/>
    </conflict>
    <text>Extended C-terminus.</text>
</comment>